<organism>
    <name type="scientific">Nandina domestica</name>
    <name type="common">Heavenly bamboo</name>
    <dbReference type="NCBI Taxonomy" id="41776"/>
    <lineage>
        <taxon>Eukaryota</taxon>
        <taxon>Viridiplantae</taxon>
        <taxon>Streptophyta</taxon>
        <taxon>Embryophyta</taxon>
        <taxon>Tracheophyta</taxon>
        <taxon>Spermatophyta</taxon>
        <taxon>Magnoliopsida</taxon>
        <taxon>Ranunculales</taxon>
        <taxon>Berberidaceae</taxon>
        <taxon>Nandinoideae</taxon>
        <taxon>Nandineae</taxon>
        <taxon>Nandina</taxon>
    </lineage>
</organism>
<name>PETN_NANDO</name>
<accession>Q09FW8</accession>
<keyword id="KW-0150">Chloroplast</keyword>
<keyword id="KW-0249">Electron transport</keyword>
<keyword id="KW-0472">Membrane</keyword>
<keyword id="KW-0602">Photosynthesis</keyword>
<keyword id="KW-0934">Plastid</keyword>
<keyword id="KW-0793">Thylakoid</keyword>
<keyword id="KW-0812">Transmembrane</keyword>
<keyword id="KW-1133">Transmembrane helix</keyword>
<keyword id="KW-0813">Transport</keyword>
<gene>
    <name evidence="1" type="primary">petN</name>
</gene>
<comment type="function">
    <text evidence="1">Component of the cytochrome b6-f complex, which mediates electron transfer between photosystem II (PSII) and photosystem I (PSI), cyclic electron flow around PSI, and state transitions.</text>
</comment>
<comment type="subunit">
    <text evidence="1">The 4 large subunits of the cytochrome b6-f complex are cytochrome b6, subunit IV (17 kDa polypeptide, PetD), cytochrome f and the Rieske protein, while the 4 small subunits are PetG, PetL, PetM and PetN. The complex functions as a dimer.</text>
</comment>
<comment type="subcellular location">
    <subcellularLocation>
        <location evidence="1">Plastid</location>
        <location evidence="1">Chloroplast thylakoid membrane</location>
        <topology evidence="1">Single-pass membrane protein</topology>
    </subcellularLocation>
</comment>
<comment type="similarity">
    <text evidence="1">Belongs to the PetN family.</text>
</comment>
<reference key="1">
    <citation type="journal article" date="2006" name="BMC Plant Biol.">
        <title>Rapid and accurate pyrosequencing of angiosperm plastid genomes.</title>
        <authorList>
            <person name="Moore M.J."/>
            <person name="Dhingra A."/>
            <person name="Soltis P.S."/>
            <person name="Shaw R."/>
            <person name="Farmerie W.G."/>
            <person name="Folta K.M."/>
            <person name="Soltis D.E."/>
        </authorList>
    </citation>
    <scope>NUCLEOTIDE SEQUENCE [LARGE SCALE GENOMIC DNA]</scope>
</reference>
<dbReference type="EMBL" id="DQ923117">
    <property type="protein sequence ID" value="ABI49856.1"/>
    <property type="molecule type" value="Genomic_DNA"/>
</dbReference>
<dbReference type="RefSeq" id="YP_740643.1">
    <property type="nucleotide sequence ID" value="NC_008336.1"/>
</dbReference>
<dbReference type="SMR" id="Q09FW8"/>
<dbReference type="GeneID" id="4271574"/>
<dbReference type="GO" id="GO:0009535">
    <property type="term" value="C:chloroplast thylakoid membrane"/>
    <property type="evidence" value="ECO:0007669"/>
    <property type="project" value="UniProtKB-SubCell"/>
</dbReference>
<dbReference type="GO" id="GO:0009512">
    <property type="term" value="C:cytochrome b6f complex"/>
    <property type="evidence" value="ECO:0007669"/>
    <property type="project" value="InterPro"/>
</dbReference>
<dbReference type="GO" id="GO:0045158">
    <property type="term" value="F:electron transporter, transferring electrons within cytochrome b6/f complex of photosystem II activity"/>
    <property type="evidence" value="ECO:0007669"/>
    <property type="project" value="InterPro"/>
</dbReference>
<dbReference type="GO" id="GO:0017004">
    <property type="term" value="P:cytochrome complex assembly"/>
    <property type="evidence" value="ECO:0007669"/>
    <property type="project" value="UniProtKB-UniRule"/>
</dbReference>
<dbReference type="GO" id="GO:0015979">
    <property type="term" value="P:photosynthesis"/>
    <property type="evidence" value="ECO:0007669"/>
    <property type="project" value="UniProtKB-KW"/>
</dbReference>
<dbReference type="HAMAP" id="MF_00395">
    <property type="entry name" value="Cytb6_f_PetN"/>
    <property type="match status" value="1"/>
</dbReference>
<dbReference type="InterPro" id="IPR036143">
    <property type="entry name" value="Cytochr_b6-f_cplx_su8_sf"/>
</dbReference>
<dbReference type="InterPro" id="IPR005497">
    <property type="entry name" value="Cytochrome_b6-f_cplx_su8"/>
</dbReference>
<dbReference type="Pfam" id="PF03742">
    <property type="entry name" value="PetN"/>
    <property type="match status" value="1"/>
</dbReference>
<dbReference type="SUPFAM" id="SSF103451">
    <property type="entry name" value="PetN subunit of the cytochrome b6f complex"/>
    <property type="match status" value="1"/>
</dbReference>
<sequence>MDIVSLAWAALMVVFTFSLSLVVWGRSGL</sequence>
<proteinExistence type="inferred from homology"/>
<feature type="chain" id="PRO_0000355450" description="Cytochrome b6-f complex subunit 8">
    <location>
        <begin position="1"/>
        <end position="29"/>
    </location>
</feature>
<feature type="transmembrane region" description="Helical" evidence="1">
    <location>
        <begin position="3"/>
        <end position="23"/>
    </location>
</feature>
<evidence type="ECO:0000255" key="1">
    <source>
        <dbReference type="HAMAP-Rule" id="MF_00395"/>
    </source>
</evidence>
<protein>
    <recommendedName>
        <fullName evidence="1">Cytochrome b6-f complex subunit 8</fullName>
    </recommendedName>
    <alternativeName>
        <fullName evidence="1">Cytochrome b6-f complex subunit PetN</fullName>
    </alternativeName>
    <alternativeName>
        <fullName evidence="1">Cytochrome b6-f complex subunit VIII</fullName>
    </alternativeName>
</protein>
<geneLocation type="chloroplast"/>